<keyword id="KW-0881">Chlorophyll catabolism</keyword>
<keyword id="KW-0963">Cytoplasm</keyword>
<keyword id="KW-0378">Hydrolase</keyword>
<keyword id="KW-0611">Plant defense</keyword>
<keyword id="KW-1185">Reference proteome</keyword>
<reference key="1">
    <citation type="journal article" date="1998" name="Plant Physiol.">
        <title>Differential expression of a novel gene in response to coronatine, methyl jasmonate, and wounding in the Coi1 mutant of Arabidopsis.</title>
        <authorList>
            <person name="Benedetti C.E."/>
            <person name="Costa C.L."/>
            <person name="Turcinelli S.R."/>
            <person name="Arruda P."/>
        </authorList>
    </citation>
    <scope>NUCLEOTIDE SEQUENCE [MRNA]</scope>
    <scope>INDUCTION</scope>
    <scope>TISSUE SPECIFICITY</scope>
    <source>
        <strain>cv. Columbia</strain>
        <strain>cv. Landsberg erecta</strain>
        <tissue>Flower</tissue>
        <tissue>Leaf</tissue>
        <tissue>Seedling</tissue>
        <tissue>Silique</tissue>
    </source>
</reference>
<reference key="2">
    <citation type="journal article" date="2000" name="Nature">
        <title>Sequence and analysis of chromosome 1 of the plant Arabidopsis thaliana.</title>
        <authorList>
            <person name="Theologis A."/>
            <person name="Ecker J.R."/>
            <person name="Palm C.J."/>
            <person name="Federspiel N.A."/>
            <person name="Kaul S."/>
            <person name="White O."/>
            <person name="Alonso J."/>
            <person name="Altafi H."/>
            <person name="Araujo R."/>
            <person name="Bowman C.L."/>
            <person name="Brooks S.Y."/>
            <person name="Buehler E."/>
            <person name="Chan A."/>
            <person name="Chao Q."/>
            <person name="Chen H."/>
            <person name="Cheuk R.F."/>
            <person name="Chin C.W."/>
            <person name="Chung M.K."/>
            <person name="Conn L."/>
            <person name="Conway A.B."/>
            <person name="Conway A.R."/>
            <person name="Creasy T.H."/>
            <person name="Dewar K."/>
            <person name="Dunn P."/>
            <person name="Etgu P."/>
            <person name="Feldblyum T.V."/>
            <person name="Feng J.-D."/>
            <person name="Fong B."/>
            <person name="Fujii C.Y."/>
            <person name="Gill J.E."/>
            <person name="Goldsmith A.D."/>
            <person name="Haas B."/>
            <person name="Hansen N.F."/>
            <person name="Hughes B."/>
            <person name="Huizar L."/>
            <person name="Hunter J.L."/>
            <person name="Jenkins J."/>
            <person name="Johnson-Hopson C."/>
            <person name="Khan S."/>
            <person name="Khaykin E."/>
            <person name="Kim C.J."/>
            <person name="Koo H.L."/>
            <person name="Kremenetskaia I."/>
            <person name="Kurtz D.B."/>
            <person name="Kwan A."/>
            <person name="Lam B."/>
            <person name="Langin-Hooper S."/>
            <person name="Lee A."/>
            <person name="Lee J.M."/>
            <person name="Lenz C.A."/>
            <person name="Li J.H."/>
            <person name="Li Y.-P."/>
            <person name="Lin X."/>
            <person name="Liu S.X."/>
            <person name="Liu Z.A."/>
            <person name="Luros J.S."/>
            <person name="Maiti R."/>
            <person name="Marziali A."/>
            <person name="Militscher J."/>
            <person name="Miranda M."/>
            <person name="Nguyen M."/>
            <person name="Nierman W.C."/>
            <person name="Osborne B.I."/>
            <person name="Pai G."/>
            <person name="Peterson J."/>
            <person name="Pham P.K."/>
            <person name="Rizzo M."/>
            <person name="Rooney T."/>
            <person name="Rowley D."/>
            <person name="Sakano H."/>
            <person name="Salzberg S.L."/>
            <person name="Schwartz J.R."/>
            <person name="Shinn P."/>
            <person name="Southwick A.M."/>
            <person name="Sun H."/>
            <person name="Tallon L.J."/>
            <person name="Tambunga G."/>
            <person name="Toriumi M.J."/>
            <person name="Town C.D."/>
            <person name="Utterback T."/>
            <person name="Van Aken S."/>
            <person name="Vaysberg M."/>
            <person name="Vysotskaia V.S."/>
            <person name="Walker M."/>
            <person name="Wu D."/>
            <person name="Yu G."/>
            <person name="Fraser C.M."/>
            <person name="Venter J.C."/>
            <person name="Davis R.W."/>
        </authorList>
    </citation>
    <scope>NUCLEOTIDE SEQUENCE [LARGE SCALE GENOMIC DNA]</scope>
    <source>
        <strain>cv. Columbia</strain>
    </source>
</reference>
<reference key="3">
    <citation type="journal article" date="2017" name="Plant J.">
        <title>Araport11: a complete reannotation of the Arabidopsis thaliana reference genome.</title>
        <authorList>
            <person name="Cheng C.Y."/>
            <person name="Krishnakumar V."/>
            <person name="Chan A.P."/>
            <person name="Thibaud-Nissen F."/>
            <person name="Schobel S."/>
            <person name="Town C.D."/>
        </authorList>
    </citation>
    <scope>GENOME REANNOTATION</scope>
    <source>
        <strain>cv. Columbia</strain>
    </source>
</reference>
<reference key="4">
    <citation type="journal article" date="2003" name="Science">
        <title>Empirical analysis of transcriptional activity in the Arabidopsis genome.</title>
        <authorList>
            <person name="Yamada K."/>
            <person name="Lim J."/>
            <person name="Dale J.M."/>
            <person name="Chen H."/>
            <person name="Shinn P."/>
            <person name="Palm C.J."/>
            <person name="Southwick A.M."/>
            <person name="Wu H.C."/>
            <person name="Kim C.J."/>
            <person name="Nguyen M."/>
            <person name="Pham P.K."/>
            <person name="Cheuk R.F."/>
            <person name="Karlin-Newmann G."/>
            <person name="Liu S.X."/>
            <person name="Lam B."/>
            <person name="Sakano H."/>
            <person name="Wu T."/>
            <person name="Yu G."/>
            <person name="Miranda M."/>
            <person name="Quach H.L."/>
            <person name="Tripp M."/>
            <person name="Chang C.H."/>
            <person name="Lee J.M."/>
            <person name="Toriumi M.J."/>
            <person name="Chan M.M."/>
            <person name="Tang C.C."/>
            <person name="Onodera C.S."/>
            <person name="Deng J.M."/>
            <person name="Akiyama K."/>
            <person name="Ansari Y."/>
            <person name="Arakawa T."/>
            <person name="Banh J."/>
            <person name="Banno F."/>
            <person name="Bowser L."/>
            <person name="Brooks S.Y."/>
            <person name="Carninci P."/>
            <person name="Chao Q."/>
            <person name="Choy N."/>
            <person name="Enju A."/>
            <person name="Goldsmith A.D."/>
            <person name="Gurjal M."/>
            <person name="Hansen N.F."/>
            <person name="Hayashizaki Y."/>
            <person name="Johnson-Hopson C."/>
            <person name="Hsuan V.W."/>
            <person name="Iida K."/>
            <person name="Karnes M."/>
            <person name="Khan S."/>
            <person name="Koesema E."/>
            <person name="Ishida J."/>
            <person name="Jiang P.X."/>
            <person name="Jones T."/>
            <person name="Kawai J."/>
            <person name="Kamiya A."/>
            <person name="Meyers C."/>
            <person name="Nakajima M."/>
            <person name="Narusaka M."/>
            <person name="Seki M."/>
            <person name="Sakurai T."/>
            <person name="Satou M."/>
            <person name="Tamse R."/>
            <person name="Vaysberg M."/>
            <person name="Wallender E.K."/>
            <person name="Wong C."/>
            <person name="Yamamura Y."/>
            <person name="Yuan S."/>
            <person name="Shinozaki K."/>
            <person name="Davis R.W."/>
            <person name="Theologis A."/>
            <person name="Ecker J.R."/>
        </authorList>
    </citation>
    <scope>NUCLEOTIDE SEQUENCE [LARGE SCALE MRNA]</scope>
    <source>
        <strain>cv. Columbia</strain>
    </source>
</reference>
<reference key="5">
    <citation type="journal article" date="1999" name="Proc. Natl. Acad. Sci. U.S.A.">
        <title>Cloning of chlorophyllase, the key enzyme in chlorophyll degradation: finding of a lipase motif and the induction by methyl jasmonate.</title>
        <authorList>
            <person name="Tsuchiya T."/>
            <person name="Ohta H."/>
            <person name="Okawa K."/>
            <person name="Iwamatsu A."/>
            <person name="Shimada H."/>
            <person name="Masuda T."/>
            <person name="Takamiya K."/>
        </authorList>
    </citation>
    <scope>FUNCTION</scope>
    <scope>CATALYTIC ACTIVITY</scope>
</reference>
<reference key="6">
    <citation type="journal article" date="2002" name="Plant Physiol.">
        <title>Altering the expression of the chlorophyllase gene ATHCOR1 in transgenic Arabidopsis caused changes in the chlorophyll-to-chlorophyllide ratio.</title>
        <authorList>
            <person name="Benedetti C.E."/>
            <person name="Arruda P."/>
        </authorList>
    </citation>
    <scope>FUNCTION</scope>
    <scope>CHARACTERIZATION</scope>
    <scope>DEVELOPMENTAL STAGE</scope>
</reference>
<reference key="7">
    <citation type="journal article" date="2005" name="Plant Cell">
        <title>Chlorophyllase 1, a damage control enzyme, affects the balance between defense pathways in plants.</title>
        <authorList>
            <person name="Kariola T."/>
            <person name="Brader G."/>
            <person name="Li J."/>
            <person name="Palva E.T."/>
        </authorList>
    </citation>
    <scope>FUNCTION</scope>
    <scope>INDUCTION</scope>
</reference>
<reference key="8">
    <citation type="journal article" date="2007" name="FEBS Lett.">
        <title>The chlorophyllases AtCLH1 and AtCLH2 are not essential for senescence-related chlorophyll breakdown in Arabidopsis thaliana.</title>
        <authorList>
            <person name="Schenk N."/>
            <person name="Schelbert S."/>
            <person name="Kanwischer M."/>
            <person name="Goldschmidt E.E."/>
            <person name="Doermann P."/>
            <person name="Hoertensteiner S."/>
        </authorList>
    </citation>
    <scope>FUNCTION</scope>
    <scope>SUBCELLULAR LOCATION</scope>
</reference>
<reference key="9">
    <citation type="journal article" date="2007" name="Zhi Wu Sheng Li Yu Fen Zi Sheng Wu Xue Xue Bao">
        <title>Repression of AtCLH1 expression results in a decrease in the ratio of chlorophyll a/b but doesnot affect the rate of chlorophyll degradation during leaf senescence.</title>
        <authorList>
            <person name="Zhou X."/>
            <person name="Liao Y."/>
            <person name="Ren G.D."/>
            <person name="Zhang Y.Y."/>
            <person name="Chen W.J."/>
            <person name="Kuai B.K."/>
        </authorList>
    </citation>
    <scope>FUNCTION</scope>
</reference>
<reference key="10">
    <citation type="journal article" date="2011" name="Plant Physiol.">
        <title>Expression of enzymes involved in chlorophyll catabolism in Arabidopsis is light controlled.</title>
        <authorList>
            <person name="Banas A.K."/>
            <person name="Labuz J."/>
            <person name="Sztatelman O."/>
            <person name="Gabrys H."/>
            <person name="Fiedor L."/>
        </authorList>
    </citation>
    <scope>INDUCTION</scope>
</reference>
<reference key="11">
    <citation type="journal article" date="2020" name="Plant Sci.">
        <title>Subcellular localization of chlorophyllase2 reveals it is not involved in chlorophyll degradation during senescence in Arabidopsis thaliana.</title>
        <authorList>
            <person name="Hu X."/>
            <person name="Jia T."/>
            <person name="Hoertensteiner S."/>
            <person name="Tanaka A."/>
            <person name="Tanaka R."/>
        </authorList>
    </citation>
    <scope>FUNCTION</scope>
</reference>
<organism>
    <name type="scientific">Arabidopsis thaliana</name>
    <name type="common">Mouse-ear cress</name>
    <dbReference type="NCBI Taxonomy" id="3702"/>
    <lineage>
        <taxon>Eukaryota</taxon>
        <taxon>Viridiplantae</taxon>
        <taxon>Streptophyta</taxon>
        <taxon>Embryophyta</taxon>
        <taxon>Tracheophyta</taxon>
        <taxon>Spermatophyta</taxon>
        <taxon>Magnoliopsida</taxon>
        <taxon>eudicotyledons</taxon>
        <taxon>Gunneridae</taxon>
        <taxon>Pentapetalae</taxon>
        <taxon>rosids</taxon>
        <taxon>malvids</taxon>
        <taxon>Brassicales</taxon>
        <taxon>Brassicaceae</taxon>
        <taxon>Camelineae</taxon>
        <taxon>Arabidopsis</taxon>
    </lineage>
</organism>
<sequence>MAAIEDSPTFSSVVTPAAFEIGSLPTTEIPVDPVENDSTAPPKPVRITCPTVAGTYPVVLFFHGFYLRNYFYSDVLNHIASHGYILVAPQLCKLLPPGGQVEVDDAGSVINWASENLKAHLPTSVNANGKYTSLVGHSRGGKTAFAVALGHAATLDPSITFSALIGIDPVAGTNKYIRTDPHILTYKPESFELDIPVAVVGTGLGPKWNNVMPPCAPTDLNHEEFYKECKATKAHFVAADYGHMDMLDDDLPGFVGFMAGCMCKNGQRKKSEMRSFVGGIVVAFLKYSLWGEKAEIRLIVKDPSVSPAKLDPSPELEEASGIFV</sequence>
<evidence type="ECO:0000250" key="1">
    <source>
        <dbReference type="UniProtKB" id="Q948R1"/>
    </source>
</evidence>
<evidence type="ECO:0000250" key="2">
    <source>
        <dbReference type="UniProtKB" id="Q9LE89"/>
    </source>
</evidence>
<evidence type="ECO:0000269" key="3">
    <source>
    </source>
</evidence>
<evidence type="ECO:0000269" key="4">
    <source>
    </source>
</evidence>
<evidence type="ECO:0000269" key="5">
    <source>
    </source>
</evidence>
<evidence type="ECO:0000269" key="6">
    <source>
    </source>
</evidence>
<evidence type="ECO:0000269" key="7">
    <source>
    </source>
</evidence>
<evidence type="ECO:0000269" key="8">
    <source>
    </source>
</evidence>
<evidence type="ECO:0000269" key="9">
    <source>
    </source>
</evidence>
<evidence type="ECO:0000269" key="10">
    <source>
    </source>
</evidence>
<evidence type="ECO:0000303" key="11">
    <source>
    </source>
</evidence>
<evidence type="ECO:0000303" key="12">
    <source>
    </source>
</evidence>
<evidence type="ECO:0000305" key="13"/>
<evidence type="ECO:0000305" key="14">
    <source>
    </source>
</evidence>
<evidence type="ECO:0000312" key="15">
    <source>
        <dbReference type="Araport" id="AT1G19670"/>
    </source>
</evidence>
<evidence type="ECO:0000312" key="16">
    <source>
        <dbReference type="EMBL" id="AAG12547.1"/>
    </source>
</evidence>
<protein>
    <recommendedName>
        <fullName evidence="11">Chlorophyllase-1</fullName>
        <shortName evidence="11">AtCLH1</shortName>
        <ecNumber evidence="3">3.1.1.14</ecNumber>
    </recommendedName>
    <alternativeName>
        <fullName evidence="13">Chlorophyll-chlorophyllido hydrolase 1</fullName>
        <shortName evidence="11">Chlase 1</shortName>
    </alternativeName>
    <alternativeName>
        <fullName evidence="11">Coronatine-induced protein 1</fullName>
        <shortName evidence="11">CORI1</shortName>
    </alternativeName>
</protein>
<comment type="function">
    <text evidence="3 4 5 6 7 9">Catalyzes the hydrolysis of ester bond in chlorophyll to yield chlorophyllide and phytol (PubMed:10611389, PubMed:11950974). Shows a preferential activity toward chlorophyll a (PubMed:11950974). Does not seem to be required for chlorophyll degradation during senescence (PubMed:17996203, PubMed:18349515, PubMed:31779896). May modulate the balance between different plant defense pathways (PubMed:15598807).</text>
</comment>
<comment type="catalytic activity">
    <reaction evidence="3">
        <text>a chlorophyll + H2O = a chlorophyllide + phytol + H(+)</text>
        <dbReference type="Rhea" id="RHEA:19605"/>
        <dbReference type="ChEBI" id="CHEBI:15377"/>
        <dbReference type="ChEBI" id="CHEBI:15378"/>
        <dbReference type="ChEBI" id="CHEBI:17327"/>
        <dbReference type="ChEBI" id="CHEBI:139291"/>
        <dbReference type="ChEBI" id="CHEBI:139292"/>
        <dbReference type="EC" id="3.1.1.14"/>
    </reaction>
    <physiologicalReaction direction="left-to-right" evidence="3">
        <dbReference type="Rhea" id="RHEA:19606"/>
    </physiologicalReaction>
</comment>
<comment type="catalytic activity">
    <reaction evidence="3">
        <text>chlorophyll a + H2O = phytol + chlorophyllide a + H(+)</text>
        <dbReference type="Rhea" id="RHEA:38011"/>
        <dbReference type="ChEBI" id="CHEBI:15377"/>
        <dbReference type="ChEBI" id="CHEBI:15378"/>
        <dbReference type="ChEBI" id="CHEBI:17327"/>
        <dbReference type="ChEBI" id="CHEBI:58416"/>
        <dbReference type="ChEBI" id="CHEBI:83348"/>
        <dbReference type="EC" id="3.1.1.14"/>
    </reaction>
    <physiologicalReaction direction="left-to-right" evidence="3">
        <dbReference type="Rhea" id="RHEA:38012"/>
    </physiologicalReaction>
</comment>
<comment type="pathway">
    <text evidence="13">Porphyrin-containing compound metabolism; chlorophyll degradation.</text>
</comment>
<comment type="subcellular location">
    <subcellularLocation>
        <location evidence="6">Cytoplasm</location>
        <location evidence="6">Cytosol</location>
    </subcellularLocation>
</comment>
<comment type="tissue specificity">
    <text evidence="10">Expressed in seedlings, leaves, flowers and siliques, but not in roots.</text>
</comment>
<comment type="developmental stage">
    <text evidence="4">Constitutively expressed in flowers with a higher level at the stage of buds.</text>
</comment>
<comment type="induction">
    <text evidence="5 8 10">Induced by methyl jasmonate, coronatine, a phytotoxin produced by some plant-pathogenic bacteria or rapidly after wounding, with a peak after 30 minutes and a return to the basal level in the following 4 hours (PubMed:9501136). Induced by methyl jasmonate (JA), wounding, infection with the bacterial pathogen Pectobacterium carotovorum, and with the fungal pathogen Alternaria brassicicola (PubMed:15598807). Induced by transition from dark to white light (PubMed:21896889). Down-regulated by dark (PubMed:21896889).</text>
</comment>
<comment type="miscellaneous">
    <text evidence="4 5 14">It has been proposed that some chlorophyllase might be transported to vacuole via the endoplasmic reticulum where they might be glycosylated (Probable). Unlike CLH2, the expression of this protein is dependent on the presence of a functional COI1 protein (PubMed:11950974). Plants silencing CLH1 exhibit reduced size, and decreased levels of chlorophyll and chlorophyllide (PubMed:15598807). Plants silencing CLH1 exhibit enhanced resistance and salicylate (SA) levels, and decreased jasmonate levels (JA) upon infection with the bacterial pathogen Pectobacterium carotovorum (PubMed:15598807). Plants silencing CLH1 exhibit enhanced susceptibility to infection by the fungal pathogen Alternaria brassicicola (PubMed:15598807).</text>
</comment>
<comment type="similarity">
    <text evidence="13">Belongs to the AB hydrolase superfamily. Lipase family.</text>
</comment>
<proteinExistence type="evidence at protein level"/>
<accession>O22527</accession>
<name>CLH1_ARATH</name>
<dbReference type="EC" id="3.1.1.14" evidence="3"/>
<dbReference type="EMBL" id="AF021244">
    <property type="protein sequence ID" value="AAC13947.1"/>
    <property type="molecule type" value="mRNA"/>
</dbReference>
<dbReference type="EMBL" id="AC007797">
    <property type="protein sequence ID" value="AAG12547.1"/>
    <property type="molecule type" value="Genomic_DNA"/>
</dbReference>
<dbReference type="EMBL" id="CP002684">
    <property type="protein sequence ID" value="AEE29881.1"/>
    <property type="molecule type" value="Genomic_DNA"/>
</dbReference>
<dbReference type="EMBL" id="AY099815">
    <property type="protein sequence ID" value="AAM20666.1"/>
    <property type="molecule type" value="mRNA"/>
</dbReference>
<dbReference type="EMBL" id="BT000309">
    <property type="protein sequence ID" value="AAN15628.1"/>
    <property type="molecule type" value="mRNA"/>
</dbReference>
<dbReference type="PIR" id="E86329">
    <property type="entry name" value="E86329"/>
</dbReference>
<dbReference type="RefSeq" id="NP_564094.1">
    <property type="nucleotide sequence ID" value="NM_101823.4"/>
</dbReference>
<dbReference type="SMR" id="O22527"/>
<dbReference type="BioGRID" id="23793">
    <property type="interactions" value="5"/>
</dbReference>
<dbReference type="FunCoup" id="O22527">
    <property type="interactions" value="16"/>
</dbReference>
<dbReference type="IntAct" id="O22527">
    <property type="interactions" value="5"/>
</dbReference>
<dbReference type="STRING" id="3702.O22527"/>
<dbReference type="SwissLipids" id="SLP:000001498"/>
<dbReference type="ESTHER" id="arath-clh1">
    <property type="family name" value="Chlorophyllase_Plant"/>
</dbReference>
<dbReference type="PaxDb" id="3702-AT1G19670.1"/>
<dbReference type="ProteomicsDB" id="241039"/>
<dbReference type="EnsemblPlants" id="AT1G19670.1">
    <property type="protein sequence ID" value="AT1G19670.1"/>
    <property type="gene ID" value="AT1G19670"/>
</dbReference>
<dbReference type="GeneID" id="838554"/>
<dbReference type="Gramene" id="AT1G19670.1">
    <property type="protein sequence ID" value="AT1G19670.1"/>
    <property type="gene ID" value="AT1G19670"/>
</dbReference>
<dbReference type="KEGG" id="ath:AT1G19670"/>
<dbReference type="Araport" id="AT1G19670"/>
<dbReference type="TAIR" id="AT1G19670">
    <property type="gene designation" value="CLH1"/>
</dbReference>
<dbReference type="eggNOG" id="ENOG502QT6A">
    <property type="taxonomic scope" value="Eukaryota"/>
</dbReference>
<dbReference type="HOGENOM" id="CLU_064603_0_0_1"/>
<dbReference type="InParanoid" id="O22527"/>
<dbReference type="OMA" id="VINWASE"/>
<dbReference type="OrthoDB" id="2093222at2759"/>
<dbReference type="PhylomeDB" id="O22527"/>
<dbReference type="BioCyc" id="MetaCyc:AT1G19670-MONOMER"/>
<dbReference type="BRENDA" id="3.1.1.14">
    <property type="organism ID" value="399"/>
</dbReference>
<dbReference type="UniPathway" id="UPA00674"/>
<dbReference type="PRO" id="PR:O22527"/>
<dbReference type="Proteomes" id="UP000006548">
    <property type="component" value="Chromosome 1"/>
</dbReference>
<dbReference type="ExpressionAtlas" id="O22527">
    <property type="expression patterns" value="baseline and differential"/>
</dbReference>
<dbReference type="GO" id="GO:0005829">
    <property type="term" value="C:cytosol"/>
    <property type="evidence" value="ECO:0007669"/>
    <property type="project" value="UniProtKB-SubCell"/>
</dbReference>
<dbReference type="GO" id="GO:0005634">
    <property type="term" value="C:nucleus"/>
    <property type="evidence" value="ECO:0007005"/>
    <property type="project" value="TAIR"/>
</dbReference>
<dbReference type="GO" id="GO:0000325">
    <property type="term" value="C:plant-type vacuole"/>
    <property type="evidence" value="ECO:0007005"/>
    <property type="project" value="TAIR"/>
</dbReference>
<dbReference type="GO" id="GO:0047746">
    <property type="term" value="F:chlorophyllase activity"/>
    <property type="evidence" value="ECO:0000314"/>
    <property type="project" value="TAIR"/>
</dbReference>
<dbReference type="GO" id="GO:0015996">
    <property type="term" value="P:chlorophyll catabolic process"/>
    <property type="evidence" value="ECO:0000314"/>
    <property type="project" value="TAIR"/>
</dbReference>
<dbReference type="GO" id="GO:0042742">
    <property type="term" value="P:defense response to bacterium"/>
    <property type="evidence" value="ECO:0000315"/>
    <property type="project" value="TAIR"/>
</dbReference>
<dbReference type="GO" id="GO:0050832">
    <property type="term" value="P:defense response to fungus"/>
    <property type="evidence" value="ECO:0000315"/>
    <property type="project" value="TAIR"/>
</dbReference>
<dbReference type="FunFam" id="3.40.50.1820:FF:000159">
    <property type="entry name" value="Chlorophyllase-2, chloroplastic"/>
    <property type="match status" value="1"/>
</dbReference>
<dbReference type="Gene3D" id="3.40.50.1820">
    <property type="entry name" value="alpha/beta hydrolase"/>
    <property type="match status" value="1"/>
</dbReference>
<dbReference type="InterPro" id="IPR029058">
    <property type="entry name" value="AB_hydrolase_fold"/>
</dbReference>
<dbReference type="InterPro" id="IPR048264">
    <property type="entry name" value="Chlorophyllase"/>
</dbReference>
<dbReference type="InterPro" id="IPR017395">
    <property type="entry name" value="Chlorophyllase-like"/>
</dbReference>
<dbReference type="PANTHER" id="PTHR33428:SF10">
    <property type="entry name" value="CHLOROPHYLLASE-1"/>
    <property type="match status" value="1"/>
</dbReference>
<dbReference type="PANTHER" id="PTHR33428">
    <property type="entry name" value="CHLOROPHYLLASE-2, CHLOROPLASTIC"/>
    <property type="match status" value="1"/>
</dbReference>
<dbReference type="Pfam" id="PF07224">
    <property type="entry name" value="Chlorophyllase"/>
    <property type="match status" value="1"/>
</dbReference>
<dbReference type="PIRSF" id="PIRSF038128">
    <property type="entry name" value="Chlorophyllase_chloroplast"/>
    <property type="match status" value="1"/>
</dbReference>
<dbReference type="SUPFAM" id="SSF53474">
    <property type="entry name" value="alpha/beta-Hydrolases"/>
    <property type="match status" value="1"/>
</dbReference>
<feature type="chain" id="PRO_0000090386" description="Chlorophyllase-1">
    <location>
        <begin position="1"/>
        <end position="324"/>
    </location>
</feature>
<feature type="short sequence motif" description="GXSXG" evidence="1">
    <location>
        <begin position="136"/>
        <end position="140"/>
    </location>
</feature>
<feature type="active site" description="Nucleophile" evidence="2">
    <location>
        <position position="138"/>
    </location>
</feature>
<feature type="active site" description="Charge relay system" evidence="2">
    <location>
        <position position="168"/>
    </location>
</feature>
<feature type="active site" description="Charge relay system" evidence="2">
    <location>
        <position position="243"/>
    </location>
</feature>
<gene>
    <name evidence="11" type="primary">CLH1</name>
    <name evidence="12" type="synonym">ATHCOR1</name>
    <name type="synonym">COR1</name>
    <name evidence="15" type="ordered locus">At1g19670</name>
    <name evidence="16" type="ORF">F6F9.28</name>
</gene>